<organism>
    <name type="scientific">Drosophila melanogaster</name>
    <name type="common">Fruit fly</name>
    <dbReference type="NCBI Taxonomy" id="7227"/>
    <lineage>
        <taxon>Eukaryota</taxon>
        <taxon>Metazoa</taxon>
        <taxon>Ecdysozoa</taxon>
        <taxon>Arthropoda</taxon>
        <taxon>Hexapoda</taxon>
        <taxon>Insecta</taxon>
        <taxon>Pterygota</taxon>
        <taxon>Neoptera</taxon>
        <taxon>Endopterygota</taxon>
        <taxon>Diptera</taxon>
        <taxon>Brachycera</taxon>
        <taxon>Muscomorpha</taxon>
        <taxon>Ephydroidea</taxon>
        <taxon>Drosophilidae</taxon>
        <taxon>Drosophila</taxon>
        <taxon>Sophophora</taxon>
    </lineage>
</organism>
<feature type="chain" id="PRO_0000174144" description="Protein mago nashi">
    <location>
        <begin position="1"/>
        <end position="147"/>
    </location>
</feature>
<feature type="mutagenesis site" description="In allele mago-1; zygotic lethal." evidence="7">
    <original>G</original>
    <variation>R</variation>
    <location>
        <position position="19"/>
    </location>
</feature>
<feature type="mutagenesis site" description="In allele mago-93D; expression of rolled/MAPK in developing eye and wing tissue is severely reduced, and photoreceptor differentiation is impaired." evidence="5">
    <original>E</original>
    <variation>K</variation>
    <location>
        <position position="21"/>
    </location>
</feature>
<feature type="mutagenesis site" description="In allele mago-WE7; zygotic lethal." evidence="7">
    <original>I</original>
    <variation>T</variation>
    <location>
        <position position="91"/>
    </location>
</feature>
<feature type="strand" evidence="12">
    <location>
        <begin position="6"/>
        <end position="16"/>
    </location>
</feature>
<feature type="strand" evidence="12">
    <location>
        <begin position="19"/>
        <end position="27"/>
    </location>
</feature>
<feature type="strand" evidence="12">
    <location>
        <begin position="31"/>
        <end position="38"/>
    </location>
</feature>
<feature type="strand" evidence="12">
    <location>
        <begin position="47"/>
        <end position="53"/>
    </location>
</feature>
<feature type="helix" evidence="12">
    <location>
        <begin position="55"/>
        <end position="68"/>
    </location>
</feature>
<feature type="helix" evidence="12">
    <location>
        <begin position="70"/>
        <end position="72"/>
    </location>
</feature>
<feature type="strand" evidence="14">
    <location>
        <begin position="75"/>
        <end position="78"/>
    </location>
</feature>
<feature type="strand" evidence="12">
    <location>
        <begin position="83"/>
        <end position="93"/>
    </location>
</feature>
<feature type="strand" evidence="12">
    <location>
        <begin position="96"/>
        <end position="102"/>
    </location>
</feature>
<feature type="helix" evidence="12">
    <location>
        <begin position="108"/>
        <end position="113"/>
    </location>
</feature>
<feature type="strand" evidence="13">
    <location>
        <begin position="114"/>
        <end position="116"/>
    </location>
</feature>
<feature type="helix" evidence="12">
    <location>
        <begin position="117"/>
        <end position="142"/>
    </location>
</feature>
<gene>
    <name evidence="11" type="primary">mago</name>
    <name evidence="11" type="synonym">mgn</name>
    <name type="ORF">CG9401</name>
</gene>
<dbReference type="EMBL" id="U03559">
    <property type="protein sequence ID" value="AAC13746.1"/>
    <property type="molecule type" value="Genomic_DNA"/>
</dbReference>
<dbReference type="EMBL" id="AE013599">
    <property type="protein sequence ID" value="AAF46677.1"/>
    <property type="molecule type" value="Genomic_DNA"/>
</dbReference>
<dbReference type="EMBL" id="AY071060">
    <property type="protein sequence ID" value="AAL48682.1"/>
    <property type="molecule type" value="mRNA"/>
</dbReference>
<dbReference type="RefSeq" id="NP_476636.1">
    <property type="nucleotide sequence ID" value="NM_057288.4"/>
</dbReference>
<dbReference type="PDB" id="1HL6">
    <property type="method" value="X-ray"/>
    <property type="resolution" value="2.50 A"/>
    <property type="chains" value="B/D=1-147"/>
</dbReference>
<dbReference type="PDB" id="1OO0">
    <property type="method" value="X-ray"/>
    <property type="resolution" value="1.85 A"/>
    <property type="chains" value="A=1-147"/>
</dbReference>
<dbReference type="PDB" id="1RK8">
    <property type="method" value="X-ray"/>
    <property type="resolution" value="1.90 A"/>
    <property type="chains" value="B=1-147"/>
</dbReference>
<dbReference type="PDB" id="2X1G">
    <property type="method" value="X-ray"/>
    <property type="resolution" value="3.35 A"/>
    <property type="chains" value="B/D=1-147"/>
</dbReference>
<dbReference type="PDBsum" id="1HL6"/>
<dbReference type="PDBsum" id="1OO0"/>
<dbReference type="PDBsum" id="1RK8"/>
<dbReference type="PDBsum" id="2X1G"/>
<dbReference type="SMR" id="P49028"/>
<dbReference type="BioGRID" id="63039">
    <property type="interactions" value="22"/>
</dbReference>
<dbReference type="ComplexPortal" id="CPX-3100">
    <property type="entry name" value="mago-y14 exon-exon junction subcomplex"/>
</dbReference>
<dbReference type="ComplexPortal" id="CPX-3147">
    <property type="entry name" value="PYM-mago-Y14 complex"/>
</dbReference>
<dbReference type="ComplexPortal" id="CPX-3171">
    <property type="entry name" value="cdm-mago-Y14 complex"/>
</dbReference>
<dbReference type="DIP" id="DIP-23439N"/>
<dbReference type="FunCoup" id="P49028">
    <property type="interactions" value="2331"/>
</dbReference>
<dbReference type="IntAct" id="P49028">
    <property type="interactions" value="9"/>
</dbReference>
<dbReference type="STRING" id="7227.FBpp0071497"/>
<dbReference type="PaxDb" id="7227-FBpp0071497"/>
<dbReference type="EnsemblMetazoa" id="FBtr0071569">
    <property type="protein sequence ID" value="FBpp0071497"/>
    <property type="gene ID" value="FBgn0002736"/>
</dbReference>
<dbReference type="GeneID" id="37402"/>
<dbReference type="KEGG" id="dme:Dmel_CG9401"/>
<dbReference type="AGR" id="FB:FBgn0002736"/>
<dbReference type="CTD" id="37402"/>
<dbReference type="FlyBase" id="FBgn0002736">
    <property type="gene designation" value="mago"/>
</dbReference>
<dbReference type="VEuPathDB" id="VectorBase:FBgn0002736"/>
<dbReference type="eggNOG" id="KOG3392">
    <property type="taxonomic scope" value="Eukaryota"/>
</dbReference>
<dbReference type="GeneTree" id="ENSGT00390000003156"/>
<dbReference type="HOGENOM" id="CLU_109497_1_1_1"/>
<dbReference type="InParanoid" id="P49028"/>
<dbReference type="OMA" id="IRKEMWI"/>
<dbReference type="OrthoDB" id="6495301at2759"/>
<dbReference type="PhylomeDB" id="P49028"/>
<dbReference type="Reactome" id="R-DME-159236">
    <property type="pathway name" value="Transport of Mature mRNA derived from an Intron-Containing Transcript"/>
</dbReference>
<dbReference type="Reactome" id="R-DME-72163">
    <property type="pathway name" value="mRNA Splicing - Major Pathway"/>
</dbReference>
<dbReference type="Reactome" id="R-DME-72187">
    <property type="pathway name" value="mRNA 3'-end processing"/>
</dbReference>
<dbReference type="Reactome" id="R-DME-73856">
    <property type="pathway name" value="RNA Polymerase II Transcription Termination"/>
</dbReference>
<dbReference type="Reactome" id="R-DME-975957">
    <property type="pathway name" value="Nonsense Mediated Decay (NMD) enhanced by the Exon Junction Complex (EJC)"/>
</dbReference>
<dbReference type="SignaLink" id="P49028"/>
<dbReference type="BioGRID-ORCS" id="37402">
    <property type="hits" value="0 hits in 3 CRISPR screens"/>
</dbReference>
<dbReference type="EvolutionaryTrace" id="P49028"/>
<dbReference type="GenomeRNAi" id="37402"/>
<dbReference type="PRO" id="PR:P49028"/>
<dbReference type="Proteomes" id="UP000000803">
    <property type="component" value="Chromosome 2R"/>
</dbReference>
<dbReference type="Bgee" id="FBgn0002736">
    <property type="expression patterns" value="Expressed in wing disc and 130 other cell types or tissues"/>
</dbReference>
<dbReference type="ExpressionAtlas" id="P49028">
    <property type="expression patterns" value="baseline and differential"/>
</dbReference>
<dbReference type="GO" id="GO:0071013">
    <property type="term" value="C:catalytic step 2 spliceosome"/>
    <property type="evidence" value="ECO:0007005"/>
    <property type="project" value="FlyBase"/>
</dbReference>
<dbReference type="GO" id="GO:0005737">
    <property type="term" value="C:cytoplasm"/>
    <property type="evidence" value="ECO:0000314"/>
    <property type="project" value="FlyBase"/>
</dbReference>
<dbReference type="GO" id="GO:0035145">
    <property type="term" value="C:exon-exon junction complex"/>
    <property type="evidence" value="ECO:0000353"/>
    <property type="project" value="FlyBase"/>
</dbReference>
<dbReference type="GO" id="GO:0042564">
    <property type="term" value="C:NLS-dependent protein nuclear import complex"/>
    <property type="evidence" value="ECO:0000353"/>
    <property type="project" value="ComplexPortal"/>
</dbReference>
<dbReference type="GO" id="GO:0005634">
    <property type="term" value="C:nucleus"/>
    <property type="evidence" value="ECO:0000314"/>
    <property type="project" value="FlyBase"/>
</dbReference>
<dbReference type="GO" id="GO:0045495">
    <property type="term" value="C:pole plasm"/>
    <property type="evidence" value="ECO:0000314"/>
    <property type="project" value="FlyBase"/>
</dbReference>
<dbReference type="GO" id="GO:0071011">
    <property type="term" value="C:precatalytic spliceosome"/>
    <property type="evidence" value="ECO:0007005"/>
    <property type="project" value="FlyBase"/>
</dbReference>
<dbReference type="GO" id="GO:0003723">
    <property type="term" value="F:RNA binding"/>
    <property type="evidence" value="ECO:0007669"/>
    <property type="project" value="UniProtKB-KW"/>
</dbReference>
<dbReference type="GO" id="GO:0051170">
    <property type="term" value="P:import into nucleus"/>
    <property type="evidence" value="ECO:0000303"/>
    <property type="project" value="ComplexPortal"/>
</dbReference>
<dbReference type="GO" id="GO:0046594">
    <property type="term" value="P:maintenance of pole plasm mRNA location"/>
    <property type="evidence" value="ECO:0000304"/>
    <property type="project" value="FlyBase"/>
</dbReference>
<dbReference type="GO" id="GO:0000226">
    <property type="term" value="P:microtubule cytoskeleton organization"/>
    <property type="evidence" value="ECO:0000304"/>
    <property type="project" value="FlyBase"/>
</dbReference>
<dbReference type="GO" id="GO:0000398">
    <property type="term" value="P:mRNA splicing, via spliceosome"/>
    <property type="evidence" value="ECO:0000305"/>
    <property type="project" value="FlyBase"/>
</dbReference>
<dbReference type="GO" id="GO:0051028">
    <property type="term" value="P:mRNA transport"/>
    <property type="evidence" value="ECO:0007669"/>
    <property type="project" value="UniProtKB-KW"/>
</dbReference>
<dbReference type="GO" id="GO:0016325">
    <property type="term" value="P:oocyte microtubule cytoskeleton organization"/>
    <property type="evidence" value="ECO:0000304"/>
    <property type="project" value="FlyBase"/>
</dbReference>
<dbReference type="GO" id="GO:0008103">
    <property type="term" value="P:oocyte microtubule cytoskeleton polarization"/>
    <property type="evidence" value="ECO:0000315"/>
    <property type="project" value="FlyBase"/>
</dbReference>
<dbReference type="GO" id="GO:0048477">
    <property type="term" value="P:oogenesis"/>
    <property type="evidence" value="ECO:0000315"/>
    <property type="project" value="FlyBase"/>
</dbReference>
<dbReference type="GO" id="GO:0007315">
    <property type="term" value="P:pole plasm assembly"/>
    <property type="evidence" value="ECO:0000304"/>
    <property type="project" value="FlyBase"/>
</dbReference>
<dbReference type="GO" id="GO:0045451">
    <property type="term" value="P:pole plasm oskar mRNA localization"/>
    <property type="evidence" value="ECO:0000304"/>
    <property type="project" value="FlyBase"/>
</dbReference>
<dbReference type="GO" id="GO:0010628">
    <property type="term" value="P:positive regulation of gene expression"/>
    <property type="evidence" value="ECO:0000315"/>
    <property type="project" value="FlyBase"/>
</dbReference>
<dbReference type="GO" id="GO:0008104">
    <property type="term" value="P:protein localization"/>
    <property type="evidence" value="ECO:0000315"/>
    <property type="project" value="FlyBase"/>
</dbReference>
<dbReference type="GO" id="GO:0007317">
    <property type="term" value="P:regulation of pole plasm oskar mRNA localization"/>
    <property type="evidence" value="ECO:0000315"/>
    <property type="project" value="FlyBase"/>
</dbReference>
<dbReference type="GO" id="GO:0008380">
    <property type="term" value="P:RNA splicing"/>
    <property type="evidence" value="ECO:0000315"/>
    <property type="project" value="FlyBase"/>
</dbReference>
<dbReference type="CDD" id="cd11295">
    <property type="entry name" value="Mago_nashi"/>
    <property type="match status" value="1"/>
</dbReference>
<dbReference type="FunFam" id="3.30.1560.10:FF:000001">
    <property type="entry name" value="Protein mago nashi homolog"/>
    <property type="match status" value="1"/>
</dbReference>
<dbReference type="Gene3D" id="3.30.1560.10">
    <property type="entry name" value="Mago nashi"/>
    <property type="match status" value="1"/>
</dbReference>
<dbReference type="InterPro" id="IPR004023">
    <property type="entry name" value="Mago_nashi"/>
</dbReference>
<dbReference type="InterPro" id="IPR036605">
    <property type="entry name" value="Mago_nashi_sf"/>
</dbReference>
<dbReference type="PANTHER" id="PTHR12638:SF0">
    <property type="entry name" value="MAGO HOMOLOG, EXON JUNCTION COMPLEX SUBUNIT-RELATED"/>
    <property type="match status" value="1"/>
</dbReference>
<dbReference type="PANTHER" id="PTHR12638">
    <property type="entry name" value="PROTEIN MAGO NASHI HOMOLOG"/>
    <property type="match status" value="1"/>
</dbReference>
<dbReference type="Pfam" id="PF02792">
    <property type="entry name" value="Mago_nashi"/>
    <property type="match status" value="1"/>
</dbReference>
<dbReference type="SUPFAM" id="SSF89817">
    <property type="entry name" value="Mago nashi protein"/>
    <property type="match status" value="1"/>
</dbReference>
<sequence>MSTEDFYLRYYVGHKGKFGHEFLEFEFRPDGKLRYANNSNYKNDTMIRKEAFVHQSVMEELKRIIIDSEIMQEDDLPWPPPDRVGRQELEIVIGDEHISFTTSKTGSLVDVNRSKDPEGLRCFYYLVQDLKCLVFSLIGLHFKIKPI</sequence>
<proteinExistence type="evidence at protein level"/>
<accession>P49028</accession>
<accession>Q9W2L3</accession>
<evidence type="ECO:0000269" key="1">
    <source>
    </source>
</evidence>
<evidence type="ECO:0000269" key="2">
    <source>
    </source>
</evidence>
<evidence type="ECO:0000269" key="3">
    <source>
    </source>
</evidence>
<evidence type="ECO:0000269" key="4">
    <source>
    </source>
</evidence>
<evidence type="ECO:0000269" key="5">
    <source>
    </source>
</evidence>
<evidence type="ECO:0000269" key="6">
    <source>
    </source>
</evidence>
<evidence type="ECO:0000269" key="7">
    <source>
    </source>
</evidence>
<evidence type="ECO:0000269" key="8">
    <source>
    </source>
</evidence>
<evidence type="ECO:0000269" key="9">
    <source>
    </source>
</evidence>
<evidence type="ECO:0000305" key="10"/>
<evidence type="ECO:0000312" key="11">
    <source>
        <dbReference type="FlyBase" id="FBgn0002736"/>
    </source>
</evidence>
<evidence type="ECO:0007829" key="12">
    <source>
        <dbReference type="PDB" id="1OO0"/>
    </source>
</evidence>
<evidence type="ECO:0007829" key="13">
    <source>
        <dbReference type="PDB" id="1RK8"/>
    </source>
</evidence>
<evidence type="ECO:0007829" key="14">
    <source>
        <dbReference type="PDB" id="2X1G"/>
    </source>
</evidence>
<keyword id="KW-0002">3D-structure</keyword>
<keyword id="KW-0963">Cytoplasm</keyword>
<keyword id="KW-0217">Developmental protein</keyword>
<keyword id="KW-0507">mRNA processing</keyword>
<keyword id="KW-0508">mRNA splicing</keyword>
<keyword id="KW-0509">mRNA transport</keyword>
<keyword id="KW-0539">Nucleus</keyword>
<keyword id="KW-1185">Reference proteome</keyword>
<keyword id="KW-0694">RNA-binding</keyword>
<keyword id="KW-0813">Transport</keyword>
<comment type="function">
    <text evidence="2 6 7 8 9">Core component of the splicing-dependent multiprotein exon junction complex (EJC) deposited at splice junctions on mRNAs (PubMed:14973490, PubMed:24967911). Involved in exon definition of genes containing long introns, including the rolled/MAPK gene (PubMed:20946982, PubMed:20946983). The mago-tsu heterodimer interacts with the EJC key regulator Pym leading to EJC disassembly in the cytoplasm (PubMed:24967911). Has a role in oskar mRNA localization to the posterior pole of the developing oocyte, and may also be involved in polarization of the oocyte microtubule cytoskeleton (PubMed:8026338, PubMed:9272960).</text>
</comment>
<comment type="subunit">
    <text evidence="1 2 3 6">Heterodimer with tsu/RBM8A (PubMed:12704080, PubMed:12730685, PubMed:14968132). Part of the mRNA splicing-dependent exon junction complex (EJC) complex; the core complex contains btz/CASC3, eIF4AIII, mago and tsu/RBM8A (PubMed:14973490). Interacts with Pym (via N-terminus); the interaction is direct (PubMed:14968132, PubMed:24967911). Interacts with eIF4AIII (PubMed:14973490).</text>
</comment>
<comment type="interaction">
    <interactant intactId="EBI-159609">
        <id>P49028</id>
    </interactant>
    <interactant intactId="EBI-172458">
        <id>Q9V535</id>
        <label>tsu</label>
    </interactant>
    <organismsDiffer>false</organismsDiffer>
    <experiments>7</experiments>
</comment>
<comment type="subcellular location">
    <subcellularLocation>
        <location evidence="2">Nucleus</location>
    </subcellularLocation>
    <subcellularLocation>
        <location evidence="2">Cytoplasm</location>
    </subcellularLocation>
    <text>Part of the EJC assembled on mRNAs in the nucleus and remains part of the complex when mRNA moves into the cytoplasm.</text>
</comment>
<comment type="developmental stage">
    <text evidence="4 7">Expressed both maternally and zygotically (PubMed:8026338). Localizes to the posterior pole of the oocyte during stage 9 of oogenesis (PubMed:14973490).</text>
</comment>
<comment type="miscellaneous">
    <text>'Mago nashi' means 'without grandchildren' in Japanese.</text>
</comment>
<comment type="similarity">
    <text evidence="10">Belongs to the mago nashi family.</text>
</comment>
<name>MGN_DROME</name>
<protein>
    <recommendedName>
        <fullName>Protein mago nashi</fullName>
    </recommendedName>
</protein>
<reference key="1">
    <citation type="journal article" date="1994" name="Development">
        <title>The mago nashi locus encodes an essential product required for germ plasm assembly in Drosophila.</title>
        <authorList>
            <person name="Newmark P.A."/>
            <person name="Boswell R.E."/>
        </authorList>
    </citation>
    <scope>NUCLEOTIDE SEQUENCE [GENOMIC DNA]</scope>
    <scope>FUNCTION</scope>
    <scope>DEVELOPMENTAL STAGE</scope>
    <scope>MUTAGENESIS OF GLY-19 AND ILE-91</scope>
</reference>
<reference key="2">
    <citation type="journal article" date="2000" name="Science">
        <title>The genome sequence of Drosophila melanogaster.</title>
        <authorList>
            <person name="Adams M.D."/>
            <person name="Celniker S.E."/>
            <person name="Holt R.A."/>
            <person name="Evans C.A."/>
            <person name="Gocayne J.D."/>
            <person name="Amanatides P.G."/>
            <person name="Scherer S.E."/>
            <person name="Li P.W."/>
            <person name="Hoskins R.A."/>
            <person name="Galle R.F."/>
            <person name="George R.A."/>
            <person name="Lewis S.E."/>
            <person name="Richards S."/>
            <person name="Ashburner M."/>
            <person name="Henderson S.N."/>
            <person name="Sutton G.G."/>
            <person name="Wortman J.R."/>
            <person name="Yandell M.D."/>
            <person name="Zhang Q."/>
            <person name="Chen L.X."/>
            <person name="Brandon R.C."/>
            <person name="Rogers Y.-H.C."/>
            <person name="Blazej R.G."/>
            <person name="Champe M."/>
            <person name="Pfeiffer B.D."/>
            <person name="Wan K.H."/>
            <person name="Doyle C."/>
            <person name="Baxter E.G."/>
            <person name="Helt G."/>
            <person name="Nelson C.R."/>
            <person name="Miklos G.L.G."/>
            <person name="Abril J.F."/>
            <person name="Agbayani A."/>
            <person name="An H.-J."/>
            <person name="Andrews-Pfannkoch C."/>
            <person name="Baldwin D."/>
            <person name="Ballew R.M."/>
            <person name="Basu A."/>
            <person name="Baxendale J."/>
            <person name="Bayraktaroglu L."/>
            <person name="Beasley E.M."/>
            <person name="Beeson K.Y."/>
            <person name="Benos P.V."/>
            <person name="Berman B.P."/>
            <person name="Bhandari D."/>
            <person name="Bolshakov S."/>
            <person name="Borkova D."/>
            <person name="Botchan M.R."/>
            <person name="Bouck J."/>
            <person name="Brokstein P."/>
            <person name="Brottier P."/>
            <person name="Burtis K.C."/>
            <person name="Busam D.A."/>
            <person name="Butler H."/>
            <person name="Cadieu E."/>
            <person name="Center A."/>
            <person name="Chandra I."/>
            <person name="Cherry J.M."/>
            <person name="Cawley S."/>
            <person name="Dahlke C."/>
            <person name="Davenport L.B."/>
            <person name="Davies P."/>
            <person name="de Pablos B."/>
            <person name="Delcher A."/>
            <person name="Deng Z."/>
            <person name="Mays A.D."/>
            <person name="Dew I."/>
            <person name="Dietz S.M."/>
            <person name="Dodson K."/>
            <person name="Doup L.E."/>
            <person name="Downes M."/>
            <person name="Dugan-Rocha S."/>
            <person name="Dunkov B.C."/>
            <person name="Dunn P."/>
            <person name="Durbin K.J."/>
            <person name="Evangelista C.C."/>
            <person name="Ferraz C."/>
            <person name="Ferriera S."/>
            <person name="Fleischmann W."/>
            <person name="Fosler C."/>
            <person name="Gabrielian A.E."/>
            <person name="Garg N.S."/>
            <person name="Gelbart W.M."/>
            <person name="Glasser K."/>
            <person name="Glodek A."/>
            <person name="Gong F."/>
            <person name="Gorrell J.H."/>
            <person name="Gu Z."/>
            <person name="Guan P."/>
            <person name="Harris M."/>
            <person name="Harris N.L."/>
            <person name="Harvey D.A."/>
            <person name="Heiman T.J."/>
            <person name="Hernandez J.R."/>
            <person name="Houck J."/>
            <person name="Hostin D."/>
            <person name="Houston K.A."/>
            <person name="Howland T.J."/>
            <person name="Wei M.-H."/>
            <person name="Ibegwam C."/>
            <person name="Jalali M."/>
            <person name="Kalush F."/>
            <person name="Karpen G.H."/>
            <person name="Ke Z."/>
            <person name="Kennison J.A."/>
            <person name="Ketchum K.A."/>
            <person name="Kimmel B.E."/>
            <person name="Kodira C.D."/>
            <person name="Kraft C.L."/>
            <person name="Kravitz S."/>
            <person name="Kulp D."/>
            <person name="Lai Z."/>
            <person name="Lasko P."/>
            <person name="Lei Y."/>
            <person name="Levitsky A.A."/>
            <person name="Li J.H."/>
            <person name="Li Z."/>
            <person name="Liang Y."/>
            <person name="Lin X."/>
            <person name="Liu X."/>
            <person name="Mattei B."/>
            <person name="McIntosh T.C."/>
            <person name="McLeod M.P."/>
            <person name="McPherson D."/>
            <person name="Merkulov G."/>
            <person name="Milshina N.V."/>
            <person name="Mobarry C."/>
            <person name="Morris J."/>
            <person name="Moshrefi A."/>
            <person name="Mount S.M."/>
            <person name="Moy M."/>
            <person name="Murphy B."/>
            <person name="Murphy L."/>
            <person name="Muzny D.M."/>
            <person name="Nelson D.L."/>
            <person name="Nelson D.R."/>
            <person name="Nelson K.A."/>
            <person name="Nixon K."/>
            <person name="Nusskern D.R."/>
            <person name="Pacleb J.M."/>
            <person name="Palazzolo M."/>
            <person name="Pittman G.S."/>
            <person name="Pan S."/>
            <person name="Pollard J."/>
            <person name="Puri V."/>
            <person name="Reese M.G."/>
            <person name="Reinert K."/>
            <person name="Remington K."/>
            <person name="Saunders R.D.C."/>
            <person name="Scheeler F."/>
            <person name="Shen H."/>
            <person name="Shue B.C."/>
            <person name="Siden-Kiamos I."/>
            <person name="Simpson M."/>
            <person name="Skupski M.P."/>
            <person name="Smith T.J."/>
            <person name="Spier E."/>
            <person name="Spradling A.C."/>
            <person name="Stapleton M."/>
            <person name="Strong R."/>
            <person name="Sun E."/>
            <person name="Svirskas R."/>
            <person name="Tector C."/>
            <person name="Turner R."/>
            <person name="Venter E."/>
            <person name="Wang A.H."/>
            <person name="Wang X."/>
            <person name="Wang Z.-Y."/>
            <person name="Wassarman D.A."/>
            <person name="Weinstock G.M."/>
            <person name="Weissenbach J."/>
            <person name="Williams S.M."/>
            <person name="Woodage T."/>
            <person name="Worley K.C."/>
            <person name="Wu D."/>
            <person name="Yang S."/>
            <person name="Yao Q.A."/>
            <person name="Ye J."/>
            <person name="Yeh R.-F."/>
            <person name="Zaveri J.S."/>
            <person name="Zhan M."/>
            <person name="Zhang G."/>
            <person name="Zhao Q."/>
            <person name="Zheng L."/>
            <person name="Zheng X.H."/>
            <person name="Zhong F.N."/>
            <person name="Zhong W."/>
            <person name="Zhou X."/>
            <person name="Zhu S.C."/>
            <person name="Zhu X."/>
            <person name="Smith H.O."/>
            <person name="Gibbs R.A."/>
            <person name="Myers E.W."/>
            <person name="Rubin G.M."/>
            <person name="Venter J.C."/>
        </authorList>
    </citation>
    <scope>NUCLEOTIDE SEQUENCE [LARGE SCALE GENOMIC DNA]</scope>
    <source>
        <strain>Berkeley</strain>
    </source>
</reference>
<reference key="3">
    <citation type="journal article" date="2002" name="Genome Biol.">
        <title>Annotation of the Drosophila melanogaster euchromatic genome: a systematic review.</title>
        <authorList>
            <person name="Misra S."/>
            <person name="Crosby M.A."/>
            <person name="Mungall C.J."/>
            <person name="Matthews B.B."/>
            <person name="Campbell K.S."/>
            <person name="Hradecky P."/>
            <person name="Huang Y."/>
            <person name="Kaminker J.S."/>
            <person name="Millburn G.H."/>
            <person name="Prochnik S.E."/>
            <person name="Smith C.D."/>
            <person name="Tupy J.L."/>
            <person name="Whitfield E.J."/>
            <person name="Bayraktaroglu L."/>
            <person name="Berman B.P."/>
            <person name="Bettencourt B.R."/>
            <person name="Celniker S.E."/>
            <person name="de Grey A.D.N.J."/>
            <person name="Drysdale R.A."/>
            <person name="Harris N.L."/>
            <person name="Richter J."/>
            <person name="Russo S."/>
            <person name="Schroeder A.J."/>
            <person name="Shu S.Q."/>
            <person name="Stapleton M."/>
            <person name="Yamada C."/>
            <person name="Ashburner M."/>
            <person name="Gelbart W.M."/>
            <person name="Rubin G.M."/>
            <person name="Lewis S.E."/>
        </authorList>
    </citation>
    <scope>GENOME REANNOTATION</scope>
    <source>
        <strain>Berkeley</strain>
    </source>
</reference>
<reference key="4">
    <citation type="journal article" date="2002" name="Genome Biol.">
        <title>A Drosophila full-length cDNA resource.</title>
        <authorList>
            <person name="Stapleton M."/>
            <person name="Carlson J.W."/>
            <person name="Brokstein P."/>
            <person name="Yu C."/>
            <person name="Champe M."/>
            <person name="George R.A."/>
            <person name="Guarin H."/>
            <person name="Kronmiller B."/>
            <person name="Pacleb J.M."/>
            <person name="Park S."/>
            <person name="Wan K.H."/>
            <person name="Rubin G.M."/>
            <person name="Celniker S.E."/>
        </authorList>
    </citation>
    <scope>NUCLEOTIDE SEQUENCE [LARGE SCALE MRNA]</scope>
    <source>
        <strain>Berkeley</strain>
        <tissue>Embryo</tissue>
    </source>
</reference>
<reference key="5">
    <citation type="journal article" date="1997" name="Development">
        <title>Mago nashi mediates the posterior follicle cell-to-oocyte signal to organize axis formation in Drosophila.</title>
        <authorList>
            <person name="Newmark P.A."/>
            <person name="Mohr S.E."/>
            <person name="Gong L."/>
            <person name="Boswell R.E."/>
        </authorList>
    </citation>
    <scope>FUNCTION</scope>
</reference>
<reference key="6">
    <citation type="journal article" date="1997" name="Curr. Biol.">
        <title>The mago nashi gene is required for the polarisation of the oocyte and the formation of perpendicular axes in Drosophila.</title>
        <authorList>
            <person name="Micklem D.R."/>
            <person name="Dasgupta R."/>
            <person name="Elliott H."/>
            <person name="Gergely F."/>
            <person name="Davidson C."/>
            <person name="Brand A."/>
            <person name="Gonzalez-Reyes A."/>
            <person name="St Johnston D."/>
        </authorList>
    </citation>
    <scope>FUNCTION</scope>
</reference>
<reference key="7">
    <citation type="journal article" date="2004" name="Nature">
        <title>An eIF4AIII-containing complex required for mRNA localization and nonsense-mediated mRNA decay.</title>
        <authorList>
            <person name="Palacios I.M."/>
            <person name="Gatfield D."/>
            <person name="St Johnston D."/>
            <person name="Izaurralde E."/>
        </authorList>
    </citation>
    <scope>FUNCTION</scope>
    <scope>IDENTIFICATION IN THE EJC COMPLEX</scope>
    <scope>INTERACTION WITH EIF4AIII</scope>
    <scope>SUBCELLULAR LOCATION</scope>
    <scope>DEVELOPMENTAL STAGE</scope>
</reference>
<reference key="8">
    <citation type="journal article" date="2010" name="Cell">
        <title>Exon junction complex subunits are required to splice Drosophila MAP kinase, a large heterochromatic gene.</title>
        <authorList>
            <person name="Roignant J.Y."/>
            <person name="Treisman J.E."/>
        </authorList>
    </citation>
    <scope>FUNCTION</scope>
    <scope>MUTAGENESIS OF GLU-21</scope>
</reference>
<reference key="9">
    <citation type="journal article" date="2010" name="Cell">
        <title>The exon junction complex controls the splicing of MAPK and other long intron-containing transcripts in Drosophila.</title>
        <authorList>
            <person name="Ashton-Beaucage D."/>
            <person name="Udell C.M."/>
            <person name="Lavoie H."/>
            <person name="Baril C."/>
            <person name="Lefrancois M."/>
            <person name="Chagnon P."/>
            <person name="Gendron P."/>
            <person name="Caron-Lizotte O."/>
            <person name="Bonneil E."/>
            <person name="Thibault P."/>
            <person name="Therrien M."/>
        </authorList>
    </citation>
    <scope>FUNCTION</scope>
</reference>
<reference key="10">
    <citation type="journal article" date="2014" name="PLoS Genet.">
        <title>The EJC binding and dissociating activity of PYM is regulated in Drosophila.</title>
        <authorList>
            <person name="Ghosh S."/>
            <person name="Obrdlik A."/>
            <person name="Marchand V."/>
            <person name="Ephrussi A."/>
        </authorList>
    </citation>
    <scope>FUNCTION</scope>
    <scope>INTERACTION WITH PYM</scope>
</reference>
<reference key="11">
    <citation type="journal article" date="2003" name="Genes Dev.">
        <title>Crystal structure of the Drosophila Mago nashi-Y14 complex.</title>
        <authorList>
            <person name="Shi H."/>
            <person name="Xu R.-M."/>
        </authorList>
    </citation>
    <scope>X-RAY CRYSTALLOGRAPHY (1.85 ANGSTROMS) IN COMPLEX WITH TSU</scope>
</reference>
<reference key="12">
    <citation type="journal article" date="2003" name="Nat. Struct. Biol.">
        <title>A novel mode of RBD-protein recognition in the Y14-Mago complex.</title>
        <authorList>
            <person name="Fribourg S."/>
            <person name="Gatfield D."/>
            <person name="Izaurralde E."/>
            <person name="Conti E."/>
        </authorList>
    </citation>
    <scope>X-RAY CRYSTALLOGRAPHY (2.5 ANGSTROMS) IN COMPLEX WITH TSU</scope>
    <scope>FUNCTION</scope>
    <scope>SUBCELLULAR LOCATION</scope>
</reference>
<reference key="13">
    <citation type="journal article" date="2004" name="EMBO Rep.">
        <title>Molecular insights into the interaction of PYM with the Mago-Y14 core of the exon junction complex.</title>
        <authorList>
            <person name="Bono F."/>
            <person name="Ebert J."/>
            <person name="Unterholzner L."/>
            <person name="Guettler T."/>
            <person name="Izaurralde E."/>
            <person name="Conti E."/>
        </authorList>
    </citation>
    <scope>X-RAY CRYSTALLOGRAPHY (1.9 ANGSTROMS) IN COMPLEX WITH TSU AND PYM</scope>
</reference>